<comment type="function">
    <text>May be involved in transcriptional regulation.</text>
</comment>
<comment type="interaction">
    <interactant intactId="EBI-10699005">
        <id>Q8N988-2</id>
    </interactant>
    <interactant intactId="EBI-930964">
        <id>P54253</id>
        <label>ATXN1</label>
    </interactant>
    <organismsDiffer>false</organismsDiffer>
    <experiments>3</experiments>
</comment>
<comment type="interaction">
    <interactant intactId="EBI-10699005">
        <id>Q8N988-2</id>
    </interactant>
    <interactant intactId="EBI-11977221">
        <id>Q86Z20</id>
        <label>CCDC125</label>
    </interactant>
    <organismsDiffer>false</organismsDiffer>
    <experiments>3</experiments>
</comment>
<comment type="interaction">
    <interactant intactId="EBI-10699005">
        <id>Q8N988-2</id>
    </interactant>
    <interactant intactId="EBI-748961">
        <id>O95273</id>
        <label>CCNDBP1</label>
    </interactant>
    <organismsDiffer>false</organismsDiffer>
    <experiments>3</experiments>
</comment>
<comment type="interaction">
    <interactant intactId="EBI-10699005">
        <id>Q8N988-2</id>
    </interactant>
    <interactant intactId="EBI-5916454">
        <id>A6NEM1</id>
        <label>GOLGA6L9</label>
    </interactant>
    <organismsDiffer>false</organismsDiffer>
    <experiments>3</experiments>
</comment>
<comment type="interaction">
    <interactant intactId="EBI-10699005">
        <id>Q8N988-2</id>
    </interactant>
    <interactant intactId="EBI-466029">
        <id>P42858</id>
        <label>HTT</label>
    </interactant>
    <organismsDiffer>false</organismsDiffer>
    <experiments>12</experiments>
</comment>
<comment type="interaction">
    <interactant intactId="EBI-10699005">
        <id>Q8N988-2</id>
    </interactant>
    <interactant intactId="EBI-11522433">
        <id>Q5JR59-3</id>
        <label>MTUS2</label>
    </interactant>
    <organismsDiffer>false</organismsDiffer>
    <experiments>3</experiments>
</comment>
<comment type="interaction">
    <interactant intactId="EBI-10699005">
        <id>Q8N988-2</id>
    </interactant>
    <interactant intactId="EBI-985879">
        <id>P37840</id>
        <label>SNCA</label>
    </interactant>
    <organismsDiffer>false</organismsDiffer>
    <experiments>3</experiments>
</comment>
<comment type="interaction">
    <interactant intactId="EBI-10699005">
        <id>Q8N988-2</id>
    </interactant>
    <interactant intactId="EBI-712466">
        <id>Q16623</id>
        <label>STX1A</label>
    </interactant>
    <organismsDiffer>false</organismsDiffer>
    <experiments>3</experiments>
</comment>
<comment type="subcellular location">
    <subcellularLocation>
        <location evidence="4">Nucleus</location>
    </subcellularLocation>
</comment>
<comment type="alternative products">
    <event type="alternative splicing"/>
    <isoform>
        <id>Q8N988-1</id>
        <name>1</name>
        <sequence type="displayed"/>
    </isoform>
    <isoform>
        <id>Q8N988-2</id>
        <name>2</name>
        <sequence type="described" ref="VSP_014515"/>
    </isoform>
</comment>
<comment type="similarity">
    <text evidence="4">Belongs to the krueppel C2H2-type zinc-finger protein family.</text>
</comment>
<comment type="sequence caution" evidence="4">
    <conflict type="miscellaneous discrepancy">
        <sequence resource="EMBL-CDS" id="AAH58040"/>
    </conflict>
    <text>Contaminating sequence. Potential poly-A sequence.</text>
</comment>
<comment type="sequence caution" evidence="4">
    <conflict type="frameshift">
        <sequence resource="EMBL-CDS" id="BAC04567"/>
    </conflict>
</comment>
<feature type="chain" id="PRO_0000047647" description="Zinc finger protein 557">
    <location>
        <begin position="1"/>
        <end position="423"/>
    </location>
</feature>
<feature type="domain" description="KRAB" evidence="2">
    <location>
        <begin position="36"/>
        <end position="107"/>
    </location>
</feature>
<feature type="zinc finger region" description="C2H2-type 1" evidence="1">
    <location>
        <begin position="145"/>
        <end position="167"/>
    </location>
</feature>
<feature type="zinc finger region" description="C2H2-type 2" evidence="1">
    <location>
        <begin position="173"/>
        <end position="195"/>
    </location>
</feature>
<feature type="zinc finger region" description="C2H2-type 3" evidence="1">
    <location>
        <begin position="201"/>
        <end position="223"/>
    </location>
</feature>
<feature type="zinc finger region" description="C2H2-type 4" evidence="1">
    <location>
        <begin position="229"/>
        <end position="251"/>
    </location>
</feature>
<feature type="zinc finger region" description="C2H2-type 5" evidence="1">
    <location>
        <begin position="257"/>
        <end position="279"/>
    </location>
</feature>
<feature type="zinc finger region" description="C2H2-type 6" evidence="1">
    <location>
        <begin position="285"/>
        <end position="307"/>
    </location>
</feature>
<feature type="zinc finger region" description="C2H2-type 7" evidence="1">
    <location>
        <begin position="313"/>
        <end position="335"/>
    </location>
</feature>
<feature type="zinc finger region" description="C2H2-type 8" evidence="1">
    <location>
        <begin position="341"/>
        <end position="363"/>
    </location>
</feature>
<feature type="zinc finger region" description="C2H2-type 9" evidence="1">
    <location>
        <begin position="369"/>
        <end position="391"/>
    </location>
</feature>
<feature type="zinc finger region" description="C2H2-type 10" evidence="1">
    <location>
        <begin position="397"/>
        <end position="419"/>
    </location>
</feature>
<feature type="splice variant" id="VSP_014515" description="In isoform 2." evidence="3">
    <original>A</original>
    <variation>ALSSLFPA</variation>
    <location>
        <position position="11"/>
    </location>
</feature>
<evidence type="ECO:0000255" key="1">
    <source>
        <dbReference type="PROSITE-ProRule" id="PRU00042"/>
    </source>
</evidence>
<evidence type="ECO:0000255" key="2">
    <source>
        <dbReference type="PROSITE-ProRule" id="PRU00119"/>
    </source>
</evidence>
<evidence type="ECO:0000303" key="3">
    <source>
    </source>
</evidence>
<evidence type="ECO:0000305" key="4"/>
<protein>
    <recommendedName>
        <fullName>Zinc finger protein 557</fullName>
    </recommendedName>
</protein>
<organism>
    <name type="scientific">Homo sapiens</name>
    <name type="common">Human</name>
    <dbReference type="NCBI Taxonomy" id="9606"/>
    <lineage>
        <taxon>Eukaryota</taxon>
        <taxon>Metazoa</taxon>
        <taxon>Chordata</taxon>
        <taxon>Craniata</taxon>
        <taxon>Vertebrata</taxon>
        <taxon>Euteleostomi</taxon>
        <taxon>Mammalia</taxon>
        <taxon>Eutheria</taxon>
        <taxon>Euarchontoglires</taxon>
        <taxon>Primates</taxon>
        <taxon>Haplorrhini</taxon>
        <taxon>Catarrhini</taxon>
        <taxon>Hominidae</taxon>
        <taxon>Homo</taxon>
    </lineage>
</organism>
<gene>
    <name type="primary">ZNF557</name>
</gene>
<reference key="1">
    <citation type="journal article" date="2004" name="Nat. Genet.">
        <title>Complete sequencing and characterization of 21,243 full-length human cDNAs.</title>
        <authorList>
            <person name="Ota T."/>
            <person name="Suzuki Y."/>
            <person name="Nishikawa T."/>
            <person name="Otsuki T."/>
            <person name="Sugiyama T."/>
            <person name="Irie R."/>
            <person name="Wakamatsu A."/>
            <person name="Hayashi K."/>
            <person name="Sato H."/>
            <person name="Nagai K."/>
            <person name="Kimura K."/>
            <person name="Makita H."/>
            <person name="Sekine M."/>
            <person name="Obayashi M."/>
            <person name="Nishi T."/>
            <person name="Shibahara T."/>
            <person name="Tanaka T."/>
            <person name="Ishii S."/>
            <person name="Yamamoto J."/>
            <person name="Saito K."/>
            <person name="Kawai Y."/>
            <person name="Isono Y."/>
            <person name="Nakamura Y."/>
            <person name="Nagahari K."/>
            <person name="Murakami K."/>
            <person name="Yasuda T."/>
            <person name="Iwayanagi T."/>
            <person name="Wagatsuma M."/>
            <person name="Shiratori A."/>
            <person name="Sudo H."/>
            <person name="Hosoiri T."/>
            <person name="Kaku Y."/>
            <person name="Kodaira H."/>
            <person name="Kondo H."/>
            <person name="Sugawara M."/>
            <person name="Takahashi M."/>
            <person name="Kanda K."/>
            <person name="Yokoi T."/>
            <person name="Furuya T."/>
            <person name="Kikkawa E."/>
            <person name="Omura Y."/>
            <person name="Abe K."/>
            <person name="Kamihara K."/>
            <person name="Katsuta N."/>
            <person name="Sato K."/>
            <person name="Tanikawa M."/>
            <person name="Yamazaki M."/>
            <person name="Ninomiya K."/>
            <person name="Ishibashi T."/>
            <person name="Yamashita H."/>
            <person name="Murakawa K."/>
            <person name="Fujimori K."/>
            <person name="Tanai H."/>
            <person name="Kimata M."/>
            <person name="Watanabe M."/>
            <person name="Hiraoka S."/>
            <person name="Chiba Y."/>
            <person name="Ishida S."/>
            <person name="Ono Y."/>
            <person name="Takiguchi S."/>
            <person name="Watanabe S."/>
            <person name="Yosida M."/>
            <person name="Hotuta T."/>
            <person name="Kusano J."/>
            <person name="Kanehori K."/>
            <person name="Takahashi-Fujii A."/>
            <person name="Hara H."/>
            <person name="Tanase T.-O."/>
            <person name="Nomura Y."/>
            <person name="Togiya S."/>
            <person name="Komai F."/>
            <person name="Hara R."/>
            <person name="Takeuchi K."/>
            <person name="Arita M."/>
            <person name="Imose N."/>
            <person name="Musashino K."/>
            <person name="Yuuki H."/>
            <person name="Oshima A."/>
            <person name="Sasaki N."/>
            <person name="Aotsuka S."/>
            <person name="Yoshikawa Y."/>
            <person name="Matsunawa H."/>
            <person name="Ichihara T."/>
            <person name="Shiohata N."/>
            <person name="Sano S."/>
            <person name="Moriya S."/>
            <person name="Momiyama H."/>
            <person name="Satoh N."/>
            <person name="Takami S."/>
            <person name="Terashima Y."/>
            <person name="Suzuki O."/>
            <person name="Nakagawa S."/>
            <person name="Senoh A."/>
            <person name="Mizoguchi H."/>
            <person name="Goto Y."/>
            <person name="Shimizu F."/>
            <person name="Wakebe H."/>
            <person name="Hishigaki H."/>
            <person name="Watanabe T."/>
            <person name="Sugiyama A."/>
            <person name="Takemoto M."/>
            <person name="Kawakami B."/>
            <person name="Yamazaki M."/>
            <person name="Watanabe K."/>
            <person name="Kumagai A."/>
            <person name="Itakura S."/>
            <person name="Fukuzumi Y."/>
            <person name="Fujimori Y."/>
            <person name="Komiyama M."/>
            <person name="Tashiro H."/>
            <person name="Tanigami A."/>
            <person name="Fujiwara T."/>
            <person name="Ono T."/>
            <person name="Yamada K."/>
            <person name="Fujii Y."/>
            <person name="Ozaki K."/>
            <person name="Hirao M."/>
            <person name="Ohmori Y."/>
            <person name="Kawabata A."/>
            <person name="Hikiji T."/>
            <person name="Kobatake N."/>
            <person name="Inagaki H."/>
            <person name="Ikema Y."/>
            <person name="Okamoto S."/>
            <person name="Okitani R."/>
            <person name="Kawakami T."/>
            <person name="Noguchi S."/>
            <person name="Itoh T."/>
            <person name="Shigeta K."/>
            <person name="Senba T."/>
            <person name="Matsumura K."/>
            <person name="Nakajima Y."/>
            <person name="Mizuno T."/>
            <person name="Morinaga M."/>
            <person name="Sasaki M."/>
            <person name="Togashi T."/>
            <person name="Oyama M."/>
            <person name="Hata H."/>
            <person name="Watanabe M."/>
            <person name="Komatsu T."/>
            <person name="Mizushima-Sugano J."/>
            <person name="Satoh T."/>
            <person name="Shirai Y."/>
            <person name="Takahashi Y."/>
            <person name="Nakagawa K."/>
            <person name="Okumura K."/>
            <person name="Nagase T."/>
            <person name="Nomura N."/>
            <person name="Kikuchi H."/>
            <person name="Masuho Y."/>
            <person name="Yamashita R."/>
            <person name="Nakai K."/>
            <person name="Yada T."/>
            <person name="Nakamura Y."/>
            <person name="Ohara O."/>
            <person name="Isogai T."/>
            <person name="Sugano S."/>
        </authorList>
    </citation>
    <scope>NUCLEOTIDE SEQUENCE [LARGE SCALE MRNA] (ISOFORM 1)</scope>
    <source>
        <tissue>Brain</tissue>
    </source>
</reference>
<reference key="2">
    <citation type="journal article" date="2004" name="Genome Res.">
        <title>The status, quality, and expansion of the NIH full-length cDNA project: the Mammalian Gene Collection (MGC).</title>
        <authorList>
            <consortium name="The MGC Project Team"/>
        </authorList>
    </citation>
    <scope>NUCLEOTIDE SEQUENCE [LARGE SCALE MRNA] OF 1-368 (ISOFORM 2)</scope>
    <source>
        <tissue>Lung</tissue>
    </source>
</reference>
<name>ZN557_HUMAN</name>
<keyword id="KW-0025">Alternative splicing</keyword>
<keyword id="KW-0238">DNA-binding</keyword>
<keyword id="KW-0479">Metal-binding</keyword>
<keyword id="KW-0539">Nucleus</keyword>
<keyword id="KW-1267">Proteomics identification</keyword>
<keyword id="KW-1185">Reference proteome</keyword>
<keyword id="KW-0677">Repeat</keyword>
<keyword id="KW-0804">Transcription</keyword>
<keyword id="KW-0805">Transcription regulation</keyword>
<keyword id="KW-0862">Zinc</keyword>
<keyword id="KW-0863">Zinc-finger</keyword>
<accession>Q8N988</accession>
<accession>Q6PEJ3</accession>
<accession>Q9BTZ1</accession>
<sequence length="423" mass="48627">MAAVVLPPTAASQREGHTEGGELVNELLKSWLKGLVTFEDVAVEFTQEEWALLDPAQRTLYRDVMLENCRNLASLGNQVDKPRLISQLEQEDKVMTEERGILSGTCPDVENPFKAKGLTPKLHVFRKEQSRNMKMERNHLGATLNECNQCFKVFSTKSSLTRHRKIHTGERPYGCSECGKSYSSRSYLAVHKRIHNGEKPYECNDCGKTFSSRSYLTVHKRIHNGEKPYECSDCGKTFSNSSYLRPHLRIHTGEKPYKCNQCFREFRTQSIFTRHKRVHTGEGHYVCNQCGKAFGTRSSLSSHYSIHTGEYPYECHDCGRTFRRRSNLTQHIRTHTGEKPYTCNECGKSFTNSFSLTIHRRIHNGEKSYECSDCGKSFNVLSSVKKHMRTHTGKKPYECNYCGKSFTSNSYLSVHTRMHNRQM</sequence>
<proteinExistence type="evidence at protein level"/>
<dbReference type="EMBL" id="AK095524">
    <property type="protein sequence ID" value="BAC04567.1"/>
    <property type="status" value="ALT_SEQ"/>
    <property type="molecule type" value="mRNA"/>
</dbReference>
<dbReference type="EMBL" id="BC003020">
    <property type="protein sequence ID" value="AAH03020.1"/>
    <property type="molecule type" value="mRNA"/>
</dbReference>
<dbReference type="EMBL" id="BC058040">
    <property type="protein sequence ID" value="AAH58040.1"/>
    <property type="status" value="ALT_SEQ"/>
    <property type="molecule type" value="mRNA"/>
</dbReference>
<dbReference type="CCDS" id="CCDS42485.1">
    <molecule id="Q8N988-2"/>
</dbReference>
<dbReference type="CCDS" id="CCDS45945.1">
    <molecule id="Q8N988-1"/>
</dbReference>
<dbReference type="RefSeq" id="NP_001037852.1">
    <molecule id="Q8N988-2"/>
    <property type="nucleotide sequence ID" value="NM_001044387.2"/>
</dbReference>
<dbReference type="RefSeq" id="NP_001037853.1">
    <molecule id="Q8N988-1"/>
    <property type="nucleotide sequence ID" value="NM_001044388.2"/>
</dbReference>
<dbReference type="RefSeq" id="NP_077317.2">
    <molecule id="Q8N988-2"/>
    <property type="nucleotide sequence ID" value="NM_024341.3"/>
</dbReference>
<dbReference type="RefSeq" id="XP_047295388.1">
    <molecule id="Q8N988-1"/>
    <property type="nucleotide sequence ID" value="XM_047439432.1"/>
</dbReference>
<dbReference type="RefSeq" id="XP_054178118.1">
    <molecule id="Q8N988-1"/>
    <property type="nucleotide sequence ID" value="XM_054322143.1"/>
</dbReference>
<dbReference type="SMR" id="Q8N988"/>
<dbReference type="BioGRID" id="122606">
    <property type="interactions" value="18"/>
</dbReference>
<dbReference type="FunCoup" id="Q8N988">
    <property type="interactions" value="285"/>
</dbReference>
<dbReference type="IntAct" id="Q8N988">
    <property type="interactions" value="26"/>
</dbReference>
<dbReference type="MINT" id="Q8N988"/>
<dbReference type="STRING" id="9606.ENSP00000252840"/>
<dbReference type="iPTMnet" id="Q8N988"/>
<dbReference type="PhosphoSitePlus" id="Q8N988"/>
<dbReference type="BioMuta" id="ZNF557"/>
<dbReference type="DMDM" id="68566211"/>
<dbReference type="jPOST" id="Q8N988"/>
<dbReference type="MassIVE" id="Q8N988"/>
<dbReference type="PaxDb" id="9606-ENSP00000252840"/>
<dbReference type="PeptideAtlas" id="Q8N988"/>
<dbReference type="ProteomicsDB" id="72505">
    <molecule id="Q8N988-1"/>
</dbReference>
<dbReference type="ProteomicsDB" id="72506">
    <molecule id="Q8N988-2"/>
</dbReference>
<dbReference type="Antibodypedia" id="6429">
    <property type="antibodies" value="95 antibodies from 19 providers"/>
</dbReference>
<dbReference type="DNASU" id="79230"/>
<dbReference type="Ensembl" id="ENST00000252840.11">
    <molecule id="Q8N988-2"/>
    <property type="protein sequence ID" value="ENSP00000252840.5"/>
    <property type="gene ID" value="ENSG00000130544.12"/>
</dbReference>
<dbReference type="Ensembl" id="ENST00000414706.2">
    <molecule id="Q8N988-1"/>
    <property type="protein sequence ID" value="ENSP00000404065.2"/>
    <property type="gene ID" value="ENSG00000130544.12"/>
</dbReference>
<dbReference type="GeneID" id="79230"/>
<dbReference type="KEGG" id="hsa:79230"/>
<dbReference type="MANE-Select" id="ENST00000252840.11">
    <molecule id="Q8N988-2"/>
    <property type="protein sequence ID" value="ENSP00000252840.5"/>
    <property type="RefSeq nucleotide sequence ID" value="NM_024341.3"/>
    <property type="RefSeq protein sequence ID" value="NP_077317.2"/>
</dbReference>
<dbReference type="UCSC" id="uc002mga.4">
    <molecule id="Q8N988-1"/>
    <property type="organism name" value="human"/>
</dbReference>
<dbReference type="AGR" id="HGNC:28632"/>
<dbReference type="CTD" id="79230"/>
<dbReference type="GeneCards" id="ZNF557"/>
<dbReference type="HGNC" id="HGNC:28632">
    <property type="gene designation" value="ZNF557"/>
</dbReference>
<dbReference type="HPA" id="ENSG00000130544">
    <property type="expression patterns" value="Low tissue specificity"/>
</dbReference>
<dbReference type="neXtProt" id="NX_Q8N988"/>
<dbReference type="OpenTargets" id="ENSG00000130544"/>
<dbReference type="PharmGKB" id="PA134866521"/>
<dbReference type="VEuPathDB" id="HostDB:ENSG00000130544"/>
<dbReference type="eggNOG" id="KOG1721">
    <property type="taxonomic scope" value="Eukaryota"/>
</dbReference>
<dbReference type="GeneTree" id="ENSGT00940000160844"/>
<dbReference type="HOGENOM" id="CLU_002678_0_9_1"/>
<dbReference type="InParanoid" id="Q8N988"/>
<dbReference type="OMA" id="EFNECNQ"/>
<dbReference type="OrthoDB" id="40579at2759"/>
<dbReference type="PAN-GO" id="Q8N988">
    <property type="GO annotations" value="3 GO annotations based on evolutionary models"/>
</dbReference>
<dbReference type="PhylomeDB" id="Q8N988"/>
<dbReference type="TreeFam" id="TF337055"/>
<dbReference type="PathwayCommons" id="Q8N988"/>
<dbReference type="Reactome" id="R-HSA-212436">
    <property type="pathway name" value="Generic Transcription Pathway"/>
</dbReference>
<dbReference type="SignaLink" id="Q8N988"/>
<dbReference type="BioGRID-ORCS" id="79230">
    <property type="hits" value="14 hits in 1174 CRISPR screens"/>
</dbReference>
<dbReference type="GenomeRNAi" id="79230"/>
<dbReference type="Pharos" id="Q8N988">
    <property type="development level" value="Tdark"/>
</dbReference>
<dbReference type="PRO" id="PR:Q8N988"/>
<dbReference type="Proteomes" id="UP000005640">
    <property type="component" value="Chromosome 19"/>
</dbReference>
<dbReference type="RNAct" id="Q8N988">
    <property type="molecule type" value="protein"/>
</dbReference>
<dbReference type="Bgee" id="ENSG00000130544">
    <property type="expression patterns" value="Expressed in male germ line stem cell (sensu Vertebrata) in testis and 113 other cell types or tissues"/>
</dbReference>
<dbReference type="GO" id="GO:0005634">
    <property type="term" value="C:nucleus"/>
    <property type="evidence" value="ECO:0000318"/>
    <property type="project" value="GO_Central"/>
</dbReference>
<dbReference type="GO" id="GO:0000981">
    <property type="term" value="F:DNA-binding transcription factor activity, RNA polymerase II-specific"/>
    <property type="evidence" value="ECO:0000318"/>
    <property type="project" value="GO_Central"/>
</dbReference>
<dbReference type="GO" id="GO:0000977">
    <property type="term" value="F:RNA polymerase II transcription regulatory region sequence-specific DNA binding"/>
    <property type="evidence" value="ECO:0000318"/>
    <property type="project" value="GO_Central"/>
</dbReference>
<dbReference type="GO" id="GO:0008270">
    <property type="term" value="F:zinc ion binding"/>
    <property type="evidence" value="ECO:0007669"/>
    <property type="project" value="UniProtKB-KW"/>
</dbReference>
<dbReference type="GO" id="GO:0006357">
    <property type="term" value="P:regulation of transcription by RNA polymerase II"/>
    <property type="evidence" value="ECO:0000318"/>
    <property type="project" value="GO_Central"/>
</dbReference>
<dbReference type="CDD" id="cd07765">
    <property type="entry name" value="KRAB_A-box"/>
    <property type="match status" value="1"/>
</dbReference>
<dbReference type="FunFam" id="3.30.160.60:FF:000638">
    <property type="entry name" value="Zinc finger protein 184"/>
    <property type="match status" value="1"/>
</dbReference>
<dbReference type="FunFam" id="3.30.160.60:FF:000295">
    <property type="entry name" value="zinc finger protein 19"/>
    <property type="match status" value="2"/>
</dbReference>
<dbReference type="FunFam" id="3.30.160.60:FF:002343">
    <property type="entry name" value="Zinc finger protein 33A"/>
    <property type="match status" value="1"/>
</dbReference>
<dbReference type="FunFam" id="3.30.160.60:FF:000052">
    <property type="entry name" value="zinc finger protein 546 isoform X1"/>
    <property type="match status" value="1"/>
</dbReference>
<dbReference type="FunFam" id="3.30.160.60:FF:000384">
    <property type="entry name" value="Zinc finger protein 550"/>
    <property type="match status" value="1"/>
</dbReference>
<dbReference type="FunFam" id="3.30.160.60:FF:003111">
    <property type="entry name" value="Zinc finger protein 557"/>
    <property type="match status" value="1"/>
</dbReference>
<dbReference type="FunFam" id="3.30.160.60:FF:003135">
    <property type="entry name" value="Zinc finger protein 557"/>
    <property type="match status" value="1"/>
</dbReference>
<dbReference type="FunFam" id="3.30.160.60:FF:000156">
    <property type="entry name" value="Zinc finger protein 568"/>
    <property type="match status" value="1"/>
</dbReference>
<dbReference type="FunFam" id="3.30.160.60:FF:000416">
    <property type="entry name" value="zinc finger protein 879 isoform X1"/>
    <property type="match status" value="1"/>
</dbReference>
<dbReference type="Gene3D" id="6.10.140.140">
    <property type="match status" value="1"/>
</dbReference>
<dbReference type="Gene3D" id="3.30.160.60">
    <property type="entry name" value="Classic Zinc Finger"/>
    <property type="match status" value="10"/>
</dbReference>
<dbReference type="InterPro" id="IPR001909">
    <property type="entry name" value="KRAB"/>
</dbReference>
<dbReference type="InterPro" id="IPR036051">
    <property type="entry name" value="KRAB_dom_sf"/>
</dbReference>
<dbReference type="InterPro" id="IPR050758">
    <property type="entry name" value="Znf_C2H2-type"/>
</dbReference>
<dbReference type="InterPro" id="IPR036236">
    <property type="entry name" value="Znf_C2H2_sf"/>
</dbReference>
<dbReference type="InterPro" id="IPR013087">
    <property type="entry name" value="Znf_C2H2_type"/>
</dbReference>
<dbReference type="PANTHER" id="PTHR23234:SF10">
    <property type="entry name" value="RIKEN CDNA 6720489N17 GENE-RELATED"/>
    <property type="match status" value="1"/>
</dbReference>
<dbReference type="PANTHER" id="PTHR23234">
    <property type="entry name" value="ZNF44 PROTEIN"/>
    <property type="match status" value="1"/>
</dbReference>
<dbReference type="Pfam" id="PF01352">
    <property type="entry name" value="KRAB"/>
    <property type="match status" value="1"/>
</dbReference>
<dbReference type="Pfam" id="PF00096">
    <property type="entry name" value="zf-C2H2"/>
    <property type="match status" value="7"/>
</dbReference>
<dbReference type="Pfam" id="PF13465">
    <property type="entry name" value="zf-H2C2_2"/>
    <property type="match status" value="1"/>
</dbReference>
<dbReference type="SMART" id="SM00349">
    <property type="entry name" value="KRAB"/>
    <property type="match status" value="1"/>
</dbReference>
<dbReference type="SMART" id="SM00355">
    <property type="entry name" value="ZnF_C2H2"/>
    <property type="match status" value="10"/>
</dbReference>
<dbReference type="SUPFAM" id="SSF57667">
    <property type="entry name" value="beta-beta-alpha zinc fingers"/>
    <property type="match status" value="6"/>
</dbReference>
<dbReference type="SUPFAM" id="SSF109640">
    <property type="entry name" value="KRAB domain (Kruppel-associated box)"/>
    <property type="match status" value="1"/>
</dbReference>
<dbReference type="PROSITE" id="PS50805">
    <property type="entry name" value="KRAB"/>
    <property type="match status" value="1"/>
</dbReference>
<dbReference type="PROSITE" id="PS00028">
    <property type="entry name" value="ZINC_FINGER_C2H2_1"/>
    <property type="match status" value="10"/>
</dbReference>
<dbReference type="PROSITE" id="PS50157">
    <property type="entry name" value="ZINC_FINGER_C2H2_2"/>
    <property type="match status" value="10"/>
</dbReference>